<dbReference type="EC" id="3.1.1.96" evidence="1"/>
<dbReference type="EMBL" id="AE017194">
    <property type="protein sequence ID" value="AAS43391.1"/>
    <property type="molecule type" value="Genomic_DNA"/>
</dbReference>
<dbReference type="SMR" id="Q730C6"/>
<dbReference type="KEGG" id="bca:BCE_4490"/>
<dbReference type="HOGENOM" id="CLU_076901_1_0_9"/>
<dbReference type="Proteomes" id="UP000002527">
    <property type="component" value="Chromosome"/>
</dbReference>
<dbReference type="GO" id="GO:0005737">
    <property type="term" value="C:cytoplasm"/>
    <property type="evidence" value="ECO:0007669"/>
    <property type="project" value="UniProtKB-SubCell"/>
</dbReference>
<dbReference type="GO" id="GO:0051500">
    <property type="term" value="F:D-tyrosyl-tRNA(Tyr) deacylase activity"/>
    <property type="evidence" value="ECO:0007669"/>
    <property type="project" value="TreeGrafter"/>
</dbReference>
<dbReference type="GO" id="GO:0106026">
    <property type="term" value="F:Gly-tRNA(Ala) deacylase activity"/>
    <property type="evidence" value="ECO:0007669"/>
    <property type="project" value="UniProtKB-UniRule"/>
</dbReference>
<dbReference type="GO" id="GO:0043908">
    <property type="term" value="F:Ser(Gly)-tRNA(Ala) hydrolase activity"/>
    <property type="evidence" value="ECO:0007669"/>
    <property type="project" value="UniProtKB-UniRule"/>
</dbReference>
<dbReference type="GO" id="GO:0000049">
    <property type="term" value="F:tRNA binding"/>
    <property type="evidence" value="ECO:0007669"/>
    <property type="project" value="UniProtKB-UniRule"/>
</dbReference>
<dbReference type="GO" id="GO:0019478">
    <property type="term" value="P:D-amino acid catabolic process"/>
    <property type="evidence" value="ECO:0007669"/>
    <property type="project" value="UniProtKB-UniRule"/>
</dbReference>
<dbReference type="CDD" id="cd00563">
    <property type="entry name" value="Dtyr_deacylase"/>
    <property type="match status" value="1"/>
</dbReference>
<dbReference type="FunFam" id="3.50.80.10:FF:000001">
    <property type="entry name" value="D-aminoacyl-tRNA deacylase"/>
    <property type="match status" value="1"/>
</dbReference>
<dbReference type="Gene3D" id="3.50.80.10">
    <property type="entry name" value="D-tyrosyl-tRNA(Tyr) deacylase"/>
    <property type="match status" value="1"/>
</dbReference>
<dbReference type="HAMAP" id="MF_00518">
    <property type="entry name" value="Deacylase_Dtd"/>
    <property type="match status" value="1"/>
</dbReference>
<dbReference type="InterPro" id="IPR003732">
    <property type="entry name" value="Daa-tRNA_deacyls_DTD"/>
</dbReference>
<dbReference type="InterPro" id="IPR023509">
    <property type="entry name" value="DTD-like_sf"/>
</dbReference>
<dbReference type="NCBIfam" id="TIGR00256">
    <property type="entry name" value="D-aminoacyl-tRNA deacylase"/>
    <property type="match status" value="1"/>
</dbReference>
<dbReference type="PANTHER" id="PTHR10472:SF5">
    <property type="entry name" value="D-AMINOACYL-TRNA DEACYLASE 1"/>
    <property type="match status" value="1"/>
</dbReference>
<dbReference type="PANTHER" id="PTHR10472">
    <property type="entry name" value="D-TYROSYL-TRNA TYR DEACYLASE"/>
    <property type="match status" value="1"/>
</dbReference>
<dbReference type="Pfam" id="PF02580">
    <property type="entry name" value="Tyr_Deacylase"/>
    <property type="match status" value="1"/>
</dbReference>
<dbReference type="SUPFAM" id="SSF69500">
    <property type="entry name" value="DTD-like"/>
    <property type="match status" value="1"/>
</dbReference>
<proteinExistence type="inferred from homology"/>
<name>DTD_BACC1</name>
<organism>
    <name type="scientific">Bacillus cereus (strain ATCC 10987 / NRS 248)</name>
    <dbReference type="NCBI Taxonomy" id="222523"/>
    <lineage>
        <taxon>Bacteria</taxon>
        <taxon>Bacillati</taxon>
        <taxon>Bacillota</taxon>
        <taxon>Bacilli</taxon>
        <taxon>Bacillales</taxon>
        <taxon>Bacillaceae</taxon>
        <taxon>Bacillus</taxon>
        <taxon>Bacillus cereus group</taxon>
    </lineage>
</organism>
<keyword id="KW-0963">Cytoplasm</keyword>
<keyword id="KW-0378">Hydrolase</keyword>
<keyword id="KW-0694">RNA-binding</keyword>
<keyword id="KW-0820">tRNA-binding</keyword>
<accession>Q730C6</accession>
<feature type="chain" id="PRO_0000164516" description="D-aminoacyl-tRNA deacylase">
    <location>
        <begin position="1"/>
        <end position="146"/>
    </location>
</feature>
<feature type="short sequence motif" description="Gly-cisPro motif, important for rejection of L-amino acids" evidence="1">
    <location>
        <begin position="137"/>
        <end position="138"/>
    </location>
</feature>
<gene>
    <name evidence="1" type="primary">dtd</name>
    <name type="ordered locus">BCE_4490</name>
</gene>
<protein>
    <recommendedName>
        <fullName evidence="1">D-aminoacyl-tRNA deacylase</fullName>
        <shortName evidence="1">DTD</shortName>
        <ecNumber evidence="1">3.1.1.96</ecNumber>
    </recommendedName>
    <alternativeName>
        <fullName evidence="1">Gly-tRNA(Ala) deacylase</fullName>
    </alternativeName>
</protein>
<reference key="1">
    <citation type="journal article" date="2004" name="Nucleic Acids Res.">
        <title>The genome sequence of Bacillus cereus ATCC 10987 reveals metabolic adaptations and a large plasmid related to Bacillus anthracis pXO1.</title>
        <authorList>
            <person name="Rasko D.A."/>
            <person name="Ravel J."/>
            <person name="Oekstad O.A."/>
            <person name="Helgason E."/>
            <person name="Cer R.Z."/>
            <person name="Jiang L."/>
            <person name="Shores K.A."/>
            <person name="Fouts D.E."/>
            <person name="Tourasse N.J."/>
            <person name="Angiuoli S.V."/>
            <person name="Kolonay J.F."/>
            <person name="Nelson W.C."/>
            <person name="Kolstoe A.-B."/>
            <person name="Fraser C.M."/>
            <person name="Read T.D."/>
        </authorList>
    </citation>
    <scope>NUCLEOTIDE SEQUENCE [LARGE SCALE GENOMIC DNA]</scope>
    <source>
        <strain>ATCC 10987 / NRS 248</strain>
    </source>
</reference>
<evidence type="ECO:0000255" key="1">
    <source>
        <dbReference type="HAMAP-Rule" id="MF_00518"/>
    </source>
</evidence>
<comment type="function">
    <text evidence="1">An aminoacyl-tRNA editing enzyme that deacylates mischarged D-aminoacyl-tRNAs. Also deacylates mischarged glycyl-tRNA(Ala), protecting cells against glycine mischarging by AlaRS. Acts via tRNA-based rather than protein-based catalysis; rejects L-amino acids rather than detecting D-amino acids in the active site. By recycling D-aminoacyl-tRNA to D-amino acids and free tRNA molecules, this enzyme counteracts the toxicity associated with the formation of D-aminoacyl-tRNA entities in vivo and helps enforce protein L-homochirality.</text>
</comment>
<comment type="catalytic activity">
    <reaction evidence="1">
        <text>glycyl-tRNA(Ala) + H2O = tRNA(Ala) + glycine + H(+)</text>
        <dbReference type="Rhea" id="RHEA:53744"/>
        <dbReference type="Rhea" id="RHEA-COMP:9657"/>
        <dbReference type="Rhea" id="RHEA-COMP:13640"/>
        <dbReference type="ChEBI" id="CHEBI:15377"/>
        <dbReference type="ChEBI" id="CHEBI:15378"/>
        <dbReference type="ChEBI" id="CHEBI:57305"/>
        <dbReference type="ChEBI" id="CHEBI:78442"/>
        <dbReference type="ChEBI" id="CHEBI:78522"/>
        <dbReference type="EC" id="3.1.1.96"/>
    </reaction>
</comment>
<comment type="catalytic activity">
    <reaction evidence="1">
        <text>a D-aminoacyl-tRNA + H2O = a tRNA + a D-alpha-amino acid + H(+)</text>
        <dbReference type="Rhea" id="RHEA:13953"/>
        <dbReference type="Rhea" id="RHEA-COMP:10123"/>
        <dbReference type="Rhea" id="RHEA-COMP:10124"/>
        <dbReference type="ChEBI" id="CHEBI:15377"/>
        <dbReference type="ChEBI" id="CHEBI:15378"/>
        <dbReference type="ChEBI" id="CHEBI:59871"/>
        <dbReference type="ChEBI" id="CHEBI:78442"/>
        <dbReference type="ChEBI" id="CHEBI:79333"/>
        <dbReference type="EC" id="3.1.1.96"/>
    </reaction>
</comment>
<comment type="subunit">
    <text evidence="1">Homodimer.</text>
</comment>
<comment type="subcellular location">
    <subcellularLocation>
        <location evidence="1">Cytoplasm</location>
    </subcellularLocation>
</comment>
<comment type="domain">
    <text evidence="1">A Gly-cisPro motif from one monomer fits into the active site of the other monomer to allow specific chiral rejection of L-amino acids.</text>
</comment>
<comment type="similarity">
    <text evidence="1">Belongs to the DTD family.</text>
</comment>
<sequence>MRVVLQRSKEASVTVDGEIVGQIPFGLTLLVGITHEDTEKDATYIAEKIANLRIFEDESGKMNHSVLDVEGQVLSISQFTLYGDCRKGRRPNFMDAAKPDYAERLYDFFNEEVRKQGLHVETGKFGAMMDVSLINDGPVTLIVESK</sequence>